<proteinExistence type="inferred from homology"/>
<comment type="subunit">
    <text evidence="1">Forms oligomers.</text>
</comment>
<comment type="subcellular location">
    <subcellularLocation>
        <location evidence="1">Cytoplasm</location>
        <location evidence="1">Nucleoid</location>
    </subcellularLocation>
</comment>
<comment type="similarity">
    <text evidence="1">Belongs to the MraZ family.</text>
</comment>
<sequence length="151" mass="17049">MFRGANAISLDAKGRLAMPSRYRDELDSRSSGQLIVTIDAVDPCLCVYPLDEWEIIETKLRALPSLREENRRLQRLLIGNAVDLELDGSGRFLVPPRLREYAKLDKRAMLVGQLNKFQLWDEDAWNAVSAADLAAIQQPGAMPDELRDLIL</sequence>
<protein>
    <recommendedName>
        <fullName>Transcriptional regulator MraZ</fullName>
    </recommendedName>
</protein>
<organism>
    <name type="scientific">Pseudomonas fluorescens (strain Pf0-1)</name>
    <dbReference type="NCBI Taxonomy" id="205922"/>
    <lineage>
        <taxon>Bacteria</taxon>
        <taxon>Pseudomonadati</taxon>
        <taxon>Pseudomonadota</taxon>
        <taxon>Gammaproteobacteria</taxon>
        <taxon>Pseudomonadales</taxon>
        <taxon>Pseudomonadaceae</taxon>
        <taxon>Pseudomonas</taxon>
    </lineage>
</organism>
<keyword id="KW-0963">Cytoplasm</keyword>
<keyword id="KW-0238">DNA-binding</keyword>
<keyword id="KW-0677">Repeat</keyword>
<keyword id="KW-0804">Transcription</keyword>
<keyword id="KW-0805">Transcription regulation</keyword>
<accession>Q3K735</accession>
<dbReference type="EMBL" id="CP000094">
    <property type="protein sequence ID" value="ABA76419.1"/>
    <property type="molecule type" value="Genomic_DNA"/>
</dbReference>
<dbReference type="RefSeq" id="WP_007917012.1">
    <property type="nucleotide sequence ID" value="NC_007492.2"/>
</dbReference>
<dbReference type="SMR" id="Q3K735"/>
<dbReference type="GeneID" id="89623189"/>
<dbReference type="KEGG" id="pfo:Pfl01_4682"/>
<dbReference type="eggNOG" id="COG2001">
    <property type="taxonomic scope" value="Bacteria"/>
</dbReference>
<dbReference type="HOGENOM" id="CLU_107907_2_0_6"/>
<dbReference type="Proteomes" id="UP000002704">
    <property type="component" value="Chromosome"/>
</dbReference>
<dbReference type="GO" id="GO:0005737">
    <property type="term" value="C:cytoplasm"/>
    <property type="evidence" value="ECO:0007669"/>
    <property type="project" value="UniProtKB-UniRule"/>
</dbReference>
<dbReference type="GO" id="GO:0009295">
    <property type="term" value="C:nucleoid"/>
    <property type="evidence" value="ECO:0007669"/>
    <property type="project" value="UniProtKB-SubCell"/>
</dbReference>
<dbReference type="GO" id="GO:0003700">
    <property type="term" value="F:DNA-binding transcription factor activity"/>
    <property type="evidence" value="ECO:0007669"/>
    <property type="project" value="UniProtKB-UniRule"/>
</dbReference>
<dbReference type="GO" id="GO:0000976">
    <property type="term" value="F:transcription cis-regulatory region binding"/>
    <property type="evidence" value="ECO:0007669"/>
    <property type="project" value="TreeGrafter"/>
</dbReference>
<dbReference type="GO" id="GO:2000143">
    <property type="term" value="P:negative regulation of DNA-templated transcription initiation"/>
    <property type="evidence" value="ECO:0007669"/>
    <property type="project" value="TreeGrafter"/>
</dbReference>
<dbReference type="CDD" id="cd16321">
    <property type="entry name" value="MraZ_C"/>
    <property type="match status" value="1"/>
</dbReference>
<dbReference type="CDD" id="cd16320">
    <property type="entry name" value="MraZ_N"/>
    <property type="match status" value="1"/>
</dbReference>
<dbReference type="Gene3D" id="3.40.1550.20">
    <property type="entry name" value="Transcriptional regulator MraZ domain"/>
    <property type="match status" value="1"/>
</dbReference>
<dbReference type="HAMAP" id="MF_01008">
    <property type="entry name" value="MraZ"/>
    <property type="match status" value="1"/>
</dbReference>
<dbReference type="InterPro" id="IPR003444">
    <property type="entry name" value="MraZ"/>
</dbReference>
<dbReference type="InterPro" id="IPR035644">
    <property type="entry name" value="MraZ_C"/>
</dbReference>
<dbReference type="InterPro" id="IPR020603">
    <property type="entry name" value="MraZ_dom"/>
</dbReference>
<dbReference type="InterPro" id="IPR035642">
    <property type="entry name" value="MraZ_N"/>
</dbReference>
<dbReference type="InterPro" id="IPR038619">
    <property type="entry name" value="MraZ_sf"/>
</dbReference>
<dbReference type="InterPro" id="IPR007159">
    <property type="entry name" value="SpoVT-AbrB_dom"/>
</dbReference>
<dbReference type="InterPro" id="IPR037914">
    <property type="entry name" value="SpoVT-AbrB_sf"/>
</dbReference>
<dbReference type="NCBIfam" id="TIGR00242">
    <property type="entry name" value="division/cell wall cluster transcriptional repressor MraZ"/>
    <property type="match status" value="1"/>
</dbReference>
<dbReference type="PANTHER" id="PTHR34701">
    <property type="entry name" value="TRANSCRIPTIONAL REGULATOR MRAZ"/>
    <property type="match status" value="1"/>
</dbReference>
<dbReference type="PANTHER" id="PTHR34701:SF1">
    <property type="entry name" value="TRANSCRIPTIONAL REGULATOR MRAZ"/>
    <property type="match status" value="1"/>
</dbReference>
<dbReference type="Pfam" id="PF02381">
    <property type="entry name" value="MraZ"/>
    <property type="match status" value="2"/>
</dbReference>
<dbReference type="SUPFAM" id="SSF89447">
    <property type="entry name" value="AbrB/MazE/MraZ-like"/>
    <property type="match status" value="1"/>
</dbReference>
<dbReference type="PROSITE" id="PS51740">
    <property type="entry name" value="SPOVT_ABRB"/>
    <property type="match status" value="2"/>
</dbReference>
<gene>
    <name evidence="1" type="primary">mraZ</name>
    <name type="ordered locus">Pfl01_4682</name>
</gene>
<feature type="chain" id="PRO_0000230101" description="Transcriptional regulator MraZ">
    <location>
        <begin position="1"/>
        <end position="151"/>
    </location>
</feature>
<feature type="domain" description="SpoVT-AbrB 1" evidence="2">
    <location>
        <begin position="5"/>
        <end position="52"/>
    </location>
</feature>
<feature type="domain" description="SpoVT-AbrB 2" evidence="2">
    <location>
        <begin position="81"/>
        <end position="124"/>
    </location>
</feature>
<reference key="1">
    <citation type="journal article" date="2009" name="Genome Biol.">
        <title>Genomic and genetic analyses of diversity and plant interactions of Pseudomonas fluorescens.</title>
        <authorList>
            <person name="Silby M.W."/>
            <person name="Cerdeno-Tarraga A.M."/>
            <person name="Vernikos G.S."/>
            <person name="Giddens S.R."/>
            <person name="Jackson R.W."/>
            <person name="Preston G.M."/>
            <person name="Zhang X.-X."/>
            <person name="Moon C.D."/>
            <person name="Gehrig S.M."/>
            <person name="Godfrey S.A.C."/>
            <person name="Knight C.G."/>
            <person name="Malone J.G."/>
            <person name="Robinson Z."/>
            <person name="Spiers A.J."/>
            <person name="Harris S."/>
            <person name="Challis G.L."/>
            <person name="Yaxley A.M."/>
            <person name="Harris D."/>
            <person name="Seeger K."/>
            <person name="Murphy L."/>
            <person name="Rutter S."/>
            <person name="Squares R."/>
            <person name="Quail M.A."/>
            <person name="Saunders E."/>
            <person name="Mavromatis K."/>
            <person name="Brettin T.S."/>
            <person name="Bentley S.D."/>
            <person name="Hothersall J."/>
            <person name="Stephens E."/>
            <person name="Thomas C.M."/>
            <person name="Parkhill J."/>
            <person name="Levy S.B."/>
            <person name="Rainey P.B."/>
            <person name="Thomson N.R."/>
        </authorList>
    </citation>
    <scope>NUCLEOTIDE SEQUENCE [LARGE SCALE GENOMIC DNA]</scope>
    <source>
        <strain>Pf0-1</strain>
    </source>
</reference>
<name>MRAZ_PSEPF</name>
<evidence type="ECO:0000255" key="1">
    <source>
        <dbReference type="HAMAP-Rule" id="MF_01008"/>
    </source>
</evidence>
<evidence type="ECO:0000255" key="2">
    <source>
        <dbReference type="PROSITE-ProRule" id="PRU01076"/>
    </source>
</evidence>